<gene>
    <name type="ordered locus">BSUIS_A0035</name>
</gene>
<keyword id="KW-0963">Cytoplasm</keyword>
<keyword id="KW-0238">DNA-binding</keyword>
<organism>
    <name type="scientific">Brucella suis (strain ATCC 23445 / NCTC 10510)</name>
    <dbReference type="NCBI Taxonomy" id="470137"/>
    <lineage>
        <taxon>Bacteria</taxon>
        <taxon>Pseudomonadati</taxon>
        <taxon>Pseudomonadota</taxon>
        <taxon>Alphaproteobacteria</taxon>
        <taxon>Hyphomicrobiales</taxon>
        <taxon>Brucellaceae</taxon>
        <taxon>Brucella/Ochrobactrum group</taxon>
        <taxon>Brucella</taxon>
    </lineage>
</organism>
<accession>B0CI53</accession>
<dbReference type="EMBL" id="CP000911">
    <property type="protein sequence ID" value="ABY37143.1"/>
    <property type="molecule type" value="Genomic_DNA"/>
</dbReference>
<dbReference type="RefSeq" id="WP_002965280.1">
    <property type="nucleotide sequence ID" value="NC_010169.1"/>
</dbReference>
<dbReference type="SMR" id="B0CI53"/>
<dbReference type="KEGG" id="bmt:BSUIS_A0035"/>
<dbReference type="HOGENOM" id="CLU_140930_0_1_5"/>
<dbReference type="Proteomes" id="UP000008545">
    <property type="component" value="Chromosome I"/>
</dbReference>
<dbReference type="GO" id="GO:0043590">
    <property type="term" value="C:bacterial nucleoid"/>
    <property type="evidence" value="ECO:0007669"/>
    <property type="project" value="UniProtKB-UniRule"/>
</dbReference>
<dbReference type="GO" id="GO:0005829">
    <property type="term" value="C:cytosol"/>
    <property type="evidence" value="ECO:0007669"/>
    <property type="project" value="TreeGrafter"/>
</dbReference>
<dbReference type="GO" id="GO:0003677">
    <property type="term" value="F:DNA binding"/>
    <property type="evidence" value="ECO:0007669"/>
    <property type="project" value="UniProtKB-UniRule"/>
</dbReference>
<dbReference type="Gene3D" id="3.30.1310.10">
    <property type="entry name" value="Nucleoid-associated protein YbaB-like domain"/>
    <property type="match status" value="1"/>
</dbReference>
<dbReference type="HAMAP" id="MF_00274">
    <property type="entry name" value="DNA_YbaB_EbfC"/>
    <property type="match status" value="1"/>
</dbReference>
<dbReference type="InterPro" id="IPR036894">
    <property type="entry name" value="YbaB-like_sf"/>
</dbReference>
<dbReference type="InterPro" id="IPR004401">
    <property type="entry name" value="YbaB/EbfC"/>
</dbReference>
<dbReference type="NCBIfam" id="TIGR00103">
    <property type="entry name" value="DNA_YbaB_EbfC"/>
    <property type="match status" value="1"/>
</dbReference>
<dbReference type="PANTHER" id="PTHR33449">
    <property type="entry name" value="NUCLEOID-ASSOCIATED PROTEIN YBAB"/>
    <property type="match status" value="1"/>
</dbReference>
<dbReference type="PANTHER" id="PTHR33449:SF1">
    <property type="entry name" value="NUCLEOID-ASSOCIATED PROTEIN YBAB"/>
    <property type="match status" value="1"/>
</dbReference>
<dbReference type="Pfam" id="PF02575">
    <property type="entry name" value="YbaB_DNA_bd"/>
    <property type="match status" value="1"/>
</dbReference>
<dbReference type="PIRSF" id="PIRSF004555">
    <property type="entry name" value="UCP004555"/>
    <property type="match status" value="1"/>
</dbReference>
<dbReference type="SUPFAM" id="SSF82607">
    <property type="entry name" value="YbaB-like"/>
    <property type="match status" value="1"/>
</dbReference>
<name>Y035_BRUSI</name>
<evidence type="ECO:0000255" key="1">
    <source>
        <dbReference type="HAMAP-Rule" id="MF_00274"/>
    </source>
</evidence>
<protein>
    <recommendedName>
        <fullName evidence="1">Nucleoid-associated protein BSUIS_A0035</fullName>
    </recommendedName>
</protein>
<proteinExistence type="inferred from homology"/>
<reference key="1">
    <citation type="submission" date="2007-12" db="EMBL/GenBank/DDBJ databases">
        <title>Brucella suis ATCC 23445 whole genome shotgun sequencing project.</title>
        <authorList>
            <person name="Setubal J.C."/>
            <person name="Bowns C."/>
            <person name="Boyle S."/>
            <person name="Crasta O.R."/>
            <person name="Czar M.J."/>
            <person name="Dharmanolla C."/>
            <person name="Gillespie J.J."/>
            <person name="Kenyon R.W."/>
            <person name="Lu J."/>
            <person name="Mane S."/>
            <person name="Mohapatra S."/>
            <person name="Nagrani S."/>
            <person name="Purkayastha A."/>
            <person name="Rajasimha H.K."/>
            <person name="Shallom J.M."/>
            <person name="Shallom S."/>
            <person name="Shukla M."/>
            <person name="Snyder E.E."/>
            <person name="Sobral B.W."/>
            <person name="Wattam A.R."/>
            <person name="Will R."/>
            <person name="Williams K."/>
            <person name="Yoo H."/>
            <person name="Bruce D."/>
            <person name="Detter C."/>
            <person name="Munk C."/>
            <person name="Brettin T.S."/>
        </authorList>
    </citation>
    <scope>NUCLEOTIDE SEQUENCE [LARGE SCALE GENOMIC DNA]</scope>
    <source>
        <strain>ATCC 23445 / NCTC 10510</strain>
    </source>
</reference>
<sequence>MRDMMGMMKQAKELQAKMKAMQDEIATMEASASSGGGLVTVTLSGKGTLSALKIDPSLMKEDEVEILEDLIIAAHNDAKAKLEAAMAEKTQSLTAGLPIPPGFKLPF</sequence>
<comment type="function">
    <text evidence="1">Binds to DNA and alters its conformation. May be involved in regulation of gene expression, nucleoid organization and DNA protection.</text>
</comment>
<comment type="subunit">
    <text evidence="1">Homodimer.</text>
</comment>
<comment type="subcellular location">
    <subcellularLocation>
        <location evidence="1">Cytoplasm</location>
        <location evidence="1">Nucleoid</location>
    </subcellularLocation>
</comment>
<comment type="similarity">
    <text evidence="1">Belongs to the YbaB/EbfC family.</text>
</comment>
<feature type="chain" id="PRO_1000078749" description="Nucleoid-associated protein BSUIS_A0035">
    <location>
        <begin position="1"/>
        <end position="107"/>
    </location>
</feature>